<proteinExistence type="inferred from homology"/>
<comment type="function">
    <text evidence="1">Involved in DNA repair and RecF pathway recombination.</text>
</comment>
<comment type="subunit">
    <text evidence="1">Monomer.</text>
</comment>
<comment type="similarity">
    <text evidence="1">Belongs to the RecO family.</text>
</comment>
<dbReference type="EMBL" id="CP000247">
    <property type="protein sequence ID" value="ABG70556.1"/>
    <property type="molecule type" value="Genomic_DNA"/>
</dbReference>
<dbReference type="RefSeq" id="WP_000399404.1">
    <property type="nucleotide sequence ID" value="NC_008253.1"/>
</dbReference>
<dbReference type="SMR" id="Q0TES3"/>
<dbReference type="KEGG" id="ecp:ECP_2567"/>
<dbReference type="HOGENOM" id="CLU_066645_1_0_6"/>
<dbReference type="Proteomes" id="UP000009182">
    <property type="component" value="Chromosome"/>
</dbReference>
<dbReference type="GO" id="GO:0043590">
    <property type="term" value="C:bacterial nucleoid"/>
    <property type="evidence" value="ECO:0007669"/>
    <property type="project" value="TreeGrafter"/>
</dbReference>
<dbReference type="GO" id="GO:0006310">
    <property type="term" value="P:DNA recombination"/>
    <property type="evidence" value="ECO:0007669"/>
    <property type="project" value="UniProtKB-UniRule"/>
</dbReference>
<dbReference type="GO" id="GO:0006302">
    <property type="term" value="P:double-strand break repair"/>
    <property type="evidence" value="ECO:0007669"/>
    <property type="project" value="TreeGrafter"/>
</dbReference>
<dbReference type="FunFam" id="1.20.1440.120:FF:000001">
    <property type="entry name" value="DNA repair protein RecO"/>
    <property type="match status" value="1"/>
</dbReference>
<dbReference type="FunFam" id="2.40.50.140:FF:000074">
    <property type="entry name" value="DNA repair protein RecO"/>
    <property type="match status" value="1"/>
</dbReference>
<dbReference type="Gene3D" id="2.40.50.140">
    <property type="entry name" value="Nucleic acid-binding proteins"/>
    <property type="match status" value="1"/>
</dbReference>
<dbReference type="Gene3D" id="1.20.1440.120">
    <property type="entry name" value="Recombination protein O, C-terminal domain"/>
    <property type="match status" value="1"/>
</dbReference>
<dbReference type="HAMAP" id="MF_00201">
    <property type="entry name" value="RecO"/>
    <property type="match status" value="1"/>
</dbReference>
<dbReference type="InterPro" id="IPR037278">
    <property type="entry name" value="ARFGAP/RecO"/>
</dbReference>
<dbReference type="InterPro" id="IPR022572">
    <property type="entry name" value="DNA_rep/recomb_RecO_N"/>
</dbReference>
<dbReference type="InterPro" id="IPR012340">
    <property type="entry name" value="NA-bd_OB-fold"/>
</dbReference>
<dbReference type="InterPro" id="IPR003717">
    <property type="entry name" value="RecO"/>
</dbReference>
<dbReference type="InterPro" id="IPR042242">
    <property type="entry name" value="RecO_C"/>
</dbReference>
<dbReference type="NCBIfam" id="TIGR00613">
    <property type="entry name" value="reco"/>
    <property type="match status" value="1"/>
</dbReference>
<dbReference type="PANTHER" id="PTHR33991">
    <property type="entry name" value="DNA REPAIR PROTEIN RECO"/>
    <property type="match status" value="1"/>
</dbReference>
<dbReference type="PANTHER" id="PTHR33991:SF1">
    <property type="entry name" value="DNA REPAIR PROTEIN RECO"/>
    <property type="match status" value="1"/>
</dbReference>
<dbReference type="Pfam" id="PF02565">
    <property type="entry name" value="RecO_C"/>
    <property type="match status" value="1"/>
</dbReference>
<dbReference type="Pfam" id="PF11967">
    <property type="entry name" value="RecO_N"/>
    <property type="match status" value="1"/>
</dbReference>
<dbReference type="SUPFAM" id="SSF57863">
    <property type="entry name" value="ArfGap/RecO-like zinc finger"/>
    <property type="match status" value="1"/>
</dbReference>
<dbReference type="SUPFAM" id="SSF50249">
    <property type="entry name" value="Nucleic acid-binding proteins"/>
    <property type="match status" value="1"/>
</dbReference>
<keyword id="KW-0227">DNA damage</keyword>
<keyword id="KW-0233">DNA recombination</keyword>
<keyword id="KW-0234">DNA repair</keyword>
<gene>
    <name evidence="1" type="primary">recO</name>
    <name type="ordered locus">ECP_2567</name>
</gene>
<organism>
    <name type="scientific">Escherichia coli O6:K15:H31 (strain 536 / UPEC)</name>
    <dbReference type="NCBI Taxonomy" id="362663"/>
    <lineage>
        <taxon>Bacteria</taxon>
        <taxon>Pseudomonadati</taxon>
        <taxon>Pseudomonadota</taxon>
        <taxon>Gammaproteobacteria</taxon>
        <taxon>Enterobacterales</taxon>
        <taxon>Enterobacteriaceae</taxon>
        <taxon>Escherichia</taxon>
    </lineage>
</organism>
<feature type="chain" id="PRO_0000264816" description="DNA repair protein RecO">
    <location>
        <begin position="1"/>
        <end position="242"/>
    </location>
</feature>
<protein>
    <recommendedName>
        <fullName evidence="1">DNA repair protein RecO</fullName>
    </recommendedName>
    <alternativeName>
        <fullName evidence="1">Recombination protein O</fullName>
    </alternativeName>
</protein>
<name>RECO_ECOL5</name>
<reference key="1">
    <citation type="journal article" date="2006" name="Mol. Microbiol.">
        <title>Role of pathogenicity island-associated integrases in the genome plasticity of uropathogenic Escherichia coli strain 536.</title>
        <authorList>
            <person name="Hochhut B."/>
            <person name="Wilde C."/>
            <person name="Balling G."/>
            <person name="Middendorf B."/>
            <person name="Dobrindt U."/>
            <person name="Brzuszkiewicz E."/>
            <person name="Gottschalk G."/>
            <person name="Carniel E."/>
            <person name="Hacker J."/>
        </authorList>
    </citation>
    <scope>NUCLEOTIDE SEQUENCE [LARGE SCALE GENOMIC DNA]</scope>
    <source>
        <strain>536 / UPEC</strain>
    </source>
</reference>
<sequence>MEGWQRAFVLHSRPWSETSLMLDVFTEESGRVRLVAKGARSKRSTLKGALQPFTPLLLRFGGRGEVKTLRSAEAVSLALPLSGITLYSGLYINELLSRVLEYETRFSELFFDYLHCIQSLAGVTGTPEPALRRFELALLGHLGYGVNFTHCAGSGEPVDDTMTYRYREEKGFIASVVIDNKTFTGRQLKALNAREFPDADTLRAAKRFTRMALKPYLGGKPLKSRELFRQFMPKRTVKTHYE</sequence>
<evidence type="ECO:0000255" key="1">
    <source>
        <dbReference type="HAMAP-Rule" id="MF_00201"/>
    </source>
</evidence>
<accession>Q0TES3</accession>